<organism>
    <name type="scientific">Myxococcus xanthus (strain DK1622)</name>
    <dbReference type="NCBI Taxonomy" id="246197"/>
    <lineage>
        <taxon>Bacteria</taxon>
        <taxon>Pseudomonadati</taxon>
        <taxon>Myxococcota</taxon>
        <taxon>Myxococcia</taxon>
        <taxon>Myxococcales</taxon>
        <taxon>Cystobacterineae</taxon>
        <taxon>Myxococcaceae</taxon>
        <taxon>Myxococcus</taxon>
    </lineage>
</organism>
<protein>
    <recommendedName>
        <fullName evidence="1">Peptide chain release factor 1</fullName>
        <shortName evidence="1">RF-1</shortName>
    </recommendedName>
</protein>
<name>RF1_MYXXD</name>
<dbReference type="EMBL" id="CP000113">
    <property type="protein sequence ID" value="ABF88557.1"/>
    <property type="molecule type" value="Genomic_DNA"/>
</dbReference>
<dbReference type="RefSeq" id="WP_011554888.1">
    <property type="nucleotide sequence ID" value="NC_008095.1"/>
</dbReference>
<dbReference type="SMR" id="Q1D2Q9"/>
<dbReference type="STRING" id="246197.MXAN_4907"/>
<dbReference type="EnsemblBacteria" id="ABF88557">
    <property type="protein sequence ID" value="ABF88557"/>
    <property type="gene ID" value="MXAN_4907"/>
</dbReference>
<dbReference type="GeneID" id="41362195"/>
<dbReference type="KEGG" id="mxa:MXAN_4907"/>
<dbReference type="eggNOG" id="COG0216">
    <property type="taxonomic scope" value="Bacteria"/>
</dbReference>
<dbReference type="HOGENOM" id="CLU_036856_0_1_7"/>
<dbReference type="OrthoDB" id="9806673at2"/>
<dbReference type="Proteomes" id="UP000002402">
    <property type="component" value="Chromosome"/>
</dbReference>
<dbReference type="GO" id="GO:0005737">
    <property type="term" value="C:cytoplasm"/>
    <property type="evidence" value="ECO:0007669"/>
    <property type="project" value="UniProtKB-SubCell"/>
</dbReference>
<dbReference type="GO" id="GO:0016149">
    <property type="term" value="F:translation release factor activity, codon specific"/>
    <property type="evidence" value="ECO:0007669"/>
    <property type="project" value="UniProtKB-UniRule"/>
</dbReference>
<dbReference type="FunFam" id="3.30.160.20:FF:000004">
    <property type="entry name" value="Peptide chain release factor 1"/>
    <property type="match status" value="1"/>
</dbReference>
<dbReference type="FunFam" id="3.30.70.1660:FF:000002">
    <property type="entry name" value="Peptide chain release factor 1"/>
    <property type="match status" value="1"/>
</dbReference>
<dbReference type="FunFam" id="3.30.70.1660:FF:000004">
    <property type="entry name" value="Peptide chain release factor 1"/>
    <property type="match status" value="1"/>
</dbReference>
<dbReference type="Gene3D" id="3.30.160.20">
    <property type="match status" value="1"/>
</dbReference>
<dbReference type="Gene3D" id="3.30.70.1660">
    <property type="match status" value="1"/>
</dbReference>
<dbReference type="Gene3D" id="6.10.140.1950">
    <property type="match status" value="1"/>
</dbReference>
<dbReference type="HAMAP" id="MF_00093">
    <property type="entry name" value="Rel_fac_1"/>
    <property type="match status" value="1"/>
</dbReference>
<dbReference type="InterPro" id="IPR005139">
    <property type="entry name" value="PCRF"/>
</dbReference>
<dbReference type="InterPro" id="IPR000352">
    <property type="entry name" value="Pep_chain_release_fac_I"/>
</dbReference>
<dbReference type="InterPro" id="IPR045853">
    <property type="entry name" value="Pep_chain_release_fac_I_sf"/>
</dbReference>
<dbReference type="InterPro" id="IPR050057">
    <property type="entry name" value="Prokaryotic/Mito_RF"/>
</dbReference>
<dbReference type="InterPro" id="IPR004373">
    <property type="entry name" value="RF-1"/>
</dbReference>
<dbReference type="NCBIfam" id="TIGR00019">
    <property type="entry name" value="prfA"/>
    <property type="match status" value="1"/>
</dbReference>
<dbReference type="NCBIfam" id="NF001859">
    <property type="entry name" value="PRK00591.1"/>
    <property type="match status" value="1"/>
</dbReference>
<dbReference type="PANTHER" id="PTHR43804">
    <property type="entry name" value="LD18447P"/>
    <property type="match status" value="1"/>
</dbReference>
<dbReference type="PANTHER" id="PTHR43804:SF7">
    <property type="entry name" value="LD18447P"/>
    <property type="match status" value="1"/>
</dbReference>
<dbReference type="Pfam" id="PF03462">
    <property type="entry name" value="PCRF"/>
    <property type="match status" value="1"/>
</dbReference>
<dbReference type="Pfam" id="PF00472">
    <property type="entry name" value="RF-1"/>
    <property type="match status" value="1"/>
</dbReference>
<dbReference type="SMART" id="SM00937">
    <property type="entry name" value="PCRF"/>
    <property type="match status" value="1"/>
</dbReference>
<dbReference type="SUPFAM" id="SSF75620">
    <property type="entry name" value="Release factor"/>
    <property type="match status" value="1"/>
</dbReference>
<dbReference type="PROSITE" id="PS00745">
    <property type="entry name" value="RF_PROK_I"/>
    <property type="match status" value="1"/>
</dbReference>
<accession>Q1D2Q9</accession>
<sequence length="362" mass="40142">MIDKLEDVERRFERLTADLSNPDVLADSARLQKVSKERAGLEKLVEAFRTYRKVLADLSEVEAWLGSSDADEKAFARESLPGLKEQRDELEASLKILLLPKDPNDEKNVILEIRAGAGGDEAALFAEEVMQMYLRYADRRGWKADILDMSPGNAGGVKDATVTLSGDAVFSSMKYESGVHRVQRVPATETQGRIHTSTITVSVMPEAEDVDVQVNPADIEMQVMRSTGSGGQSVNTTDSAVRLIHHPTGIVVKCQQEKSQLKNRTMAMRMLRAKLYDIEQERIRNERDSARRAQVGTGDRSEKIRTYNFPQDRLTDHRIGLTVHNLPGVMAGDVEDVITACRTFYQAEALKAQTAGGPKPSA</sequence>
<keyword id="KW-0963">Cytoplasm</keyword>
<keyword id="KW-0488">Methylation</keyword>
<keyword id="KW-0648">Protein biosynthesis</keyword>
<keyword id="KW-1185">Reference proteome</keyword>
<feature type="chain" id="PRO_0000263302" description="Peptide chain release factor 1">
    <location>
        <begin position="1"/>
        <end position="362"/>
    </location>
</feature>
<feature type="modified residue" description="N5-methylglutamine" evidence="1">
    <location>
        <position position="232"/>
    </location>
</feature>
<gene>
    <name evidence="1" type="primary">prfA</name>
    <name type="ordered locus">MXAN_4907</name>
</gene>
<proteinExistence type="inferred from homology"/>
<reference key="1">
    <citation type="journal article" date="2006" name="Proc. Natl. Acad. Sci. U.S.A.">
        <title>Evolution of sensory complexity recorded in a myxobacterial genome.</title>
        <authorList>
            <person name="Goldman B.S."/>
            <person name="Nierman W.C."/>
            <person name="Kaiser D."/>
            <person name="Slater S.C."/>
            <person name="Durkin A.S."/>
            <person name="Eisen J.A."/>
            <person name="Ronning C.M."/>
            <person name="Barbazuk W.B."/>
            <person name="Blanchard M."/>
            <person name="Field C."/>
            <person name="Halling C."/>
            <person name="Hinkle G."/>
            <person name="Iartchuk O."/>
            <person name="Kim H.S."/>
            <person name="Mackenzie C."/>
            <person name="Madupu R."/>
            <person name="Miller N."/>
            <person name="Shvartsbeyn A."/>
            <person name="Sullivan S.A."/>
            <person name="Vaudin M."/>
            <person name="Wiegand R."/>
            <person name="Kaplan H.B."/>
        </authorList>
    </citation>
    <scope>NUCLEOTIDE SEQUENCE [LARGE SCALE GENOMIC DNA]</scope>
    <source>
        <strain>DK1622</strain>
    </source>
</reference>
<evidence type="ECO:0000255" key="1">
    <source>
        <dbReference type="HAMAP-Rule" id="MF_00093"/>
    </source>
</evidence>
<comment type="function">
    <text evidence="1">Peptide chain release factor 1 directs the termination of translation in response to the peptide chain termination codons UAG and UAA.</text>
</comment>
<comment type="subcellular location">
    <subcellularLocation>
        <location evidence="1">Cytoplasm</location>
    </subcellularLocation>
</comment>
<comment type="PTM">
    <text evidence="1">Methylated by PrmC. Methylation increases the termination efficiency of RF1.</text>
</comment>
<comment type="similarity">
    <text evidence="1">Belongs to the prokaryotic/mitochondrial release factor family.</text>
</comment>